<dbReference type="EMBL" id="AY099321">
    <property type="protein sequence ID" value="AAM43808.1"/>
    <property type="molecule type" value="mRNA"/>
</dbReference>
<dbReference type="SMR" id="Q8JGT7"/>
<dbReference type="GO" id="GO:0005576">
    <property type="term" value="C:extracellular region"/>
    <property type="evidence" value="ECO:0007669"/>
    <property type="project" value="UniProtKB-SubCell"/>
</dbReference>
<dbReference type="GO" id="GO:0090729">
    <property type="term" value="F:toxin activity"/>
    <property type="evidence" value="ECO:0007669"/>
    <property type="project" value="UniProtKB-KW"/>
</dbReference>
<dbReference type="FunFam" id="3.10.100.10:FF:000087">
    <property type="entry name" value="Snaclec rhodocetin subunit delta"/>
    <property type="match status" value="1"/>
</dbReference>
<dbReference type="Gene3D" id="3.10.100.10">
    <property type="entry name" value="Mannose-Binding Protein A, subunit A"/>
    <property type="match status" value="1"/>
</dbReference>
<dbReference type="InterPro" id="IPR001304">
    <property type="entry name" value="C-type_lectin-like"/>
</dbReference>
<dbReference type="InterPro" id="IPR016186">
    <property type="entry name" value="C-type_lectin-like/link_sf"/>
</dbReference>
<dbReference type="InterPro" id="IPR050111">
    <property type="entry name" value="C-type_lectin/snaclec_domain"/>
</dbReference>
<dbReference type="InterPro" id="IPR018378">
    <property type="entry name" value="C-type_lectin_CS"/>
</dbReference>
<dbReference type="InterPro" id="IPR016187">
    <property type="entry name" value="CTDL_fold"/>
</dbReference>
<dbReference type="PANTHER" id="PTHR22803">
    <property type="entry name" value="MANNOSE, PHOSPHOLIPASE, LECTIN RECEPTOR RELATED"/>
    <property type="match status" value="1"/>
</dbReference>
<dbReference type="Pfam" id="PF00059">
    <property type="entry name" value="Lectin_C"/>
    <property type="match status" value="1"/>
</dbReference>
<dbReference type="PRINTS" id="PR01504">
    <property type="entry name" value="PNCREATITSAP"/>
</dbReference>
<dbReference type="SMART" id="SM00034">
    <property type="entry name" value="CLECT"/>
    <property type="match status" value="1"/>
</dbReference>
<dbReference type="SUPFAM" id="SSF56436">
    <property type="entry name" value="C-type lectin-like"/>
    <property type="match status" value="1"/>
</dbReference>
<dbReference type="PROSITE" id="PS00615">
    <property type="entry name" value="C_TYPE_LECTIN_1"/>
    <property type="match status" value="1"/>
</dbReference>
<dbReference type="PROSITE" id="PS50041">
    <property type="entry name" value="C_TYPE_LECTIN_2"/>
    <property type="match status" value="1"/>
</dbReference>
<keyword id="KW-0903">Direct protein sequencing</keyword>
<keyword id="KW-1015">Disulfide bond</keyword>
<keyword id="KW-0325">Glycoprotein</keyword>
<keyword id="KW-1199">Hemostasis impairing toxin</keyword>
<keyword id="KW-1202">Platelet aggregation activating toxin</keyword>
<keyword id="KW-0964">Secreted</keyword>
<keyword id="KW-0732">Signal</keyword>
<keyword id="KW-0800">Toxin</keyword>
<proteinExistence type="evidence at protein level"/>
<comment type="function">
    <text evidence="2 3 4 5">Potent platelet activator that acts via GPIb (GP1BA/GP1BB) (PubMed:15175804). After activation by the toxin, the receptor is redistributed on platelet surface thanks to cytoskeletal translocation. The indirect activation of integrin alpha-IIb/beta-3 (ITGA2B/ITGB3) also induced by the toxin is downstream the cytoskeletal translocation of GPIb (PubMed:16102113).</text>
</comment>
<comment type="subunit">
    <text evidence="2">Dimer and tetramer of heterodimers of alpha and beta subunits ((alphabeta)(2) and (alphabeta)(4)); disulfide-linked. These two multimeric forms are found.</text>
</comment>
<comment type="subcellular location">
    <subcellularLocation>
        <location>Secreted</location>
    </subcellularLocation>
</comment>
<comment type="tissue specificity">
    <text>Expressed by the venom gland.</text>
</comment>
<comment type="PTM">
    <text evidence="2">The complex is glycosylated.</text>
</comment>
<comment type="mass spectrometry" mass="15536.0" method="Unknown" evidence="2"/>
<comment type="miscellaneous">
    <text evidence="7">Negative results: does not act by binding GPVI (GP6) and integrin alpha-2/beta-1 (ITGA2/ITGB1) (PubMed:15175804, PubMed:15501291). Does not bind to platelet GPIX (GP9), GPIIb (ITGA2B), and GPIIIa (ITGB3) (PubMed:15501291).</text>
</comment>
<comment type="similarity">
    <text evidence="6">Belongs to the snaclec family.</text>
</comment>
<reference key="1">
    <citation type="journal article" date="2002" name="Toxicon">
        <title>Purification and cloning of a novel C-type lectin-like protein with platelet aggregation activity from Trimeresurus mucrosquamatus venom.</title>
        <authorList>
            <person name="Wei Q."/>
            <person name="Lu Q.-M."/>
            <person name="Jin Y."/>
            <person name="Li R."/>
            <person name="Wei J.-F."/>
            <person name="Wang W.-Y."/>
            <person name="Xiong Y.-L."/>
        </authorList>
    </citation>
    <scope>NUCLEOTIDE SEQUENCE [MRNA]</scope>
    <scope>PROTEIN SEQUENCE OF 24-58</scope>
    <scope>FUNCTION</scope>
    <scope>SUBUNIT</scope>
    <scope>MASS SPECTROMETRY</scope>
    <source>
        <tissue>Venom</tissue>
        <tissue>Venom gland</tissue>
    </source>
</reference>
<reference key="2">
    <citation type="journal article" date="2004" name="Thromb. Haemost.">
        <title>GPIb is involved in platelet aggregation induced by mucetin, a snake C-type lectin protein from Chinese habu (Trimeresurus mucrosquamatus) venom.</title>
        <authorList>
            <person name="Lu Q."/>
            <person name="Navdaev A."/>
            <person name="Clemetson J.M."/>
            <person name="Clemetson K.J."/>
        </authorList>
    </citation>
    <scope>FUNCTION</scope>
    <source>
        <tissue>Venom</tissue>
    </source>
</reference>
<reference key="3">
    <citation type="journal article" date="2004" name="Toxicon">
        <title>TMVA, a snake C-type lectin-like protein from Trimeresurus mucrosquamatus venom, activates platelet via GPIb.</title>
        <authorList>
            <person name="Tai H."/>
            <person name="Wei Q."/>
            <person name="Jin Y."/>
            <person name="Su M."/>
            <person name="Song J.X."/>
            <person name="Zhou X.D."/>
            <person name="Ouyang H.M."/>
            <person name="Wang W.Y."/>
            <person name="Xiong Y.L."/>
            <person name="Zhang Y."/>
        </authorList>
    </citation>
    <scope>FUNCTION</scope>
</reference>
<reference key="4">
    <citation type="journal article" date="2005" name="J. Thromb. Haemost.">
        <title>Translocation of GPIb and Fc receptor gamma-chain to cytoskeleton in mucetin-activated platelets.</title>
        <authorList>
            <person name="Lu Q."/>
            <person name="Clemetson J.M."/>
            <person name="Clemetson K.J."/>
        </authorList>
    </citation>
    <scope>FUNCTION</scope>
</reference>
<feature type="signal peptide" evidence="2">
    <location>
        <begin position="1"/>
        <end position="23"/>
    </location>
</feature>
<feature type="chain" id="PRO_0000355295" description="Snaclec mucetin subunit alpha">
    <location>
        <begin position="24"/>
        <end position="158"/>
    </location>
</feature>
<feature type="domain" description="C-type lectin" evidence="1">
    <location>
        <begin position="34"/>
        <end position="153"/>
    </location>
</feature>
<feature type="disulfide bond" evidence="1">
    <location>
        <begin position="27"/>
        <end position="38"/>
    </location>
</feature>
<feature type="disulfide bond" evidence="1">
    <location>
        <begin position="55"/>
        <end position="152"/>
    </location>
</feature>
<feature type="disulfide bond" description="Interchain (with C-100 in subunit beta of heterodimeric partner)" evidence="1">
    <location>
        <position position="104"/>
    </location>
</feature>
<feature type="disulfide bond" evidence="1">
    <location>
        <begin position="127"/>
        <end position="144"/>
    </location>
</feature>
<feature type="disulfide bond" description="Interchain (with C-26 in subunit beta of multimeric partner)" evidence="1">
    <location>
        <position position="158"/>
    </location>
</feature>
<evidence type="ECO:0000255" key="1">
    <source>
        <dbReference type="PROSITE-ProRule" id="PRU00040"/>
    </source>
</evidence>
<evidence type="ECO:0000269" key="2">
    <source>
    </source>
</evidence>
<evidence type="ECO:0000269" key="3">
    <source>
    </source>
</evidence>
<evidence type="ECO:0000269" key="4">
    <source>
    </source>
</evidence>
<evidence type="ECO:0000269" key="5">
    <source>
    </source>
</evidence>
<evidence type="ECO:0000305" key="6"/>
<evidence type="ECO:0000305" key="7">
    <source>
    </source>
</evidence>
<protein>
    <recommendedName>
        <fullName>Snaclec mucetin subunit alpha</fullName>
    </recommendedName>
    <alternativeName>
        <fullName>Trimeresurus mucrosquamatus venom activator subunit alpha</fullName>
        <shortName>TMVA subunit alpha</shortName>
    </alternativeName>
</protein>
<organism>
    <name type="scientific">Protobothrops mucrosquamatus</name>
    <name type="common">Taiwan habu</name>
    <name type="synonym">Trimeresurus mucrosquamatus</name>
    <dbReference type="NCBI Taxonomy" id="103944"/>
    <lineage>
        <taxon>Eukaryota</taxon>
        <taxon>Metazoa</taxon>
        <taxon>Chordata</taxon>
        <taxon>Craniata</taxon>
        <taxon>Vertebrata</taxon>
        <taxon>Euteleostomi</taxon>
        <taxon>Lepidosauria</taxon>
        <taxon>Squamata</taxon>
        <taxon>Bifurcata</taxon>
        <taxon>Unidentata</taxon>
        <taxon>Episquamata</taxon>
        <taxon>Toxicofera</taxon>
        <taxon>Serpentes</taxon>
        <taxon>Colubroidea</taxon>
        <taxon>Viperidae</taxon>
        <taxon>Crotalinae</taxon>
        <taxon>Protobothrops</taxon>
    </lineage>
</organism>
<name>SLEA_PROMU</name>
<accession>Q8JGT7</accession>
<sequence length="158" mass="18101">MGRFTFVSFGLLVVFLSLSGTGADFDCIPGWSAYDRYCYQAFSEPKNWEDAESFCEEGVKTSHLVSIESSGEGDFVAQLVAEKIKTSFQYVWIGLRIQNKEQQCRSEWSDASSVNYENLFKQSSKKCYALKKGTELRTWFNVYCGRENPFVCKYTPEC</sequence>